<comment type="function">
    <text evidence="1">Non-essential, abundant cell division factor that is required for proper Z-ring formation. It is recruited early to the divisome by direct interaction with FtsZ, stimulating Z-ring assembly and thereby promoting cell division earlier in the cell cycle. Its recruitment to the Z-ring requires functional FtsA or ZipA.</text>
</comment>
<comment type="subunit">
    <text evidence="1">Homodimer. The ends of the coiled-coil dimer bind to each other, forming polymers. Interacts with FtsZ.</text>
</comment>
<comment type="subcellular location">
    <subcellularLocation>
        <location>Cytoplasm</location>
    </subcellularLocation>
    <text evidence="1">Localizes to the septum at mid-cell, in a FtsZ-like pattern.</text>
</comment>
<comment type="similarity">
    <text evidence="1">Belongs to the ZapB family.</text>
</comment>
<protein>
    <recommendedName>
        <fullName evidence="1">Cell division protein ZapB</fullName>
    </recommendedName>
</protein>
<keyword id="KW-0131">Cell cycle</keyword>
<keyword id="KW-0132">Cell division</keyword>
<keyword id="KW-0175">Coiled coil</keyword>
<keyword id="KW-0963">Cytoplasm</keyword>
<keyword id="KW-1185">Reference proteome</keyword>
<keyword id="KW-0717">Septation</keyword>
<proteinExistence type="inferred from homology"/>
<gene>
    <name evidence="1" type="primary">zapB</name>
    <name type="ordered locus">YPO0093</name>
    <name type="ordered locus">y0045</name>
    <name type="ordered locus">YP_0097</name>
</gene>
<feature type="chain" id="PRO_0000333946" description="Cell division protein ZapB">
    <location>
        <begin position="1"/>
        <end position="79"/>
    </location>
</feature>
<feature type="coiled-coil region" evidence="1">
    <location>
        <begin position="6"/>
        <end position="78"/>
    </location>
</feature>
<organism>
    <name type="scientific">Yersinia pestis</name>
    <dbReference type="NCBI Taxonomy" id="632"/>
    <lineage>
        <taxon>Bacteria</taxon>
        <taxon>Pseudomonadati</taxon>
        <taxon>Pseudomonadota</taxon>
        <taxon>Gammaproteobacteria</taxon>
        <taxon>Enterobacterales</taxon>
        <taxon>Yersiniaceae</taxon>
        <taxon>Yersinia</taxon>
    </lineage>
</organism>
<name>ZAPB_YERPE</name>
<dbReference type="EMBL" id="AE009952">
    <property type="protein sequence ID" value="AAM83640.1"/>
    <property type="molecule type" value="Genomic_DNA"/>
</dbReference>
<dbReference type="EMBL" id="AE017042">
    <property type="protein sequence ID" value="AAS60376.1"/>
    <property type="molecule type" value="Genomic_DNA"/>
</dbReference>
<dbReference type="EMBL" id="AL590842">
    <property type="protein sequence ID" value="CAL18782.1"/>
    <property type="molecule type" value="Genomic_DNA"/>
</dbReference>
<dbReference type="PIR" id="AE0012">
    <property type="entry name" value="AE0012"/>
</dbReference>
<dbReference type="RefSeq" id="WP_002208953.1">
    <property type="nucleotide sequence ID" value="NZ_WUCM01000015.1"/>
</dbReference>
<dbReference type="RefSeq" id="YP_002345185.1">
    <property type="nucleotide sequence ID" value="NC_003143.1"/>
</dbReference>
<dbReference type="SMR" id="Q7CLC9"/>
<dbReference type="STRING" id="214092.YPO0093"/>
<dbReference type="PaxDb" id="214092-YPO0093"/>
<dbReference type="DNASU" id="1144992"/>
<dbReference type="EnsemblBacteria" id="AAS60376">
    <property type="protein sequence ID" value="AAS60376"/>
    <property type="gene ID" value="YP_0097"/>
</dbReference>
<dbReference type="GeneID" id="96663567"/>
<dbReference type="KEGG" id="ype:YPO0093"/>
<dbReference type="KEGG" id="ypk:y0045"/>
<dbReference type="KEGG" id="ypm:YP_0097"/>
<dbReference type="PATRIC" id="fig|214092.21.peg.318"/>
<dbReference type="eggNOG" id="COG3074">
    <property type="taxonomic scope" value="Bacteria"/>
</dbReference>
<dbReference type="HOGENOM" id="CLU_171174_2_0_6"/>
<dbReference type="OMA" id="REQQNGW"/>
<dbReference type="OrthoDB" id="6554593at2"/>
<dbReference type="Proteomes" id="UP000000815">
    <property type="component" value="Chromosome"/>
</dbReference>
<dbReference type="Proteomes" id="UP000001019">
    <property type="component" value="Chromosome"/>
</dbReference>
<dbReference type="Proteomes" id="UP000002490">
    <property type="component" value="Chromosome"/>
</dbReference>
<dbReference type="GO" id="GO:0005737">
    <property type="term" value="C:cytoplasm"/>
    <property type="evidence" value="ECO:0007669"/>
    <property type="project" value="UniProtKB-SubCell"/>
</dbReference>
<dbReference type="GO" id="GO:0000917">
    <property type="term" value="P:division septum assembly"/>
    <property type="evidence" value="ECO:0007669"/>
    <property type="project" value="UniProtKB-KW"/>
</dbReference>
<dbReference type="GO" id="GO:0043093">
    <property type="term" value="P:FtsZ-dependent cytokinesis"/>
    <property type="evidence" value="ECO:0007669"/>
    <property type="project" value="UniProtKB-UniRule"/>
</dbReference>
<dbReference type="Gene3D" id="1.20.5.340">
    <property type="match status" value="1"/>
</dbReference>
<dbReference type="HAMAP" id="MF_01196">
    <property type="entry name" value="ZapB"/>
    <property type="match status" value="1"/>
</dbReference>
<dbReference type="InterPro" id="IPR009252">
    <property type="entry name" value="Cell_div_ZapB"/>
</dbReference>
<dbReference type="NCBIfam" id="NF011951">
    <property type="entry name" value="PRK15422.1"/>
    <property type="match status" value="1"/>
</dbReference>
<dbReference type="Pfam" id="PF06005">
    <property type="entry name" value="ZapB"/>
    <property type="match status" value="1"/>
</dbReference>
<reference key="1">
    <citation type="journal article" date="2002" name="J. Bacteriol.">
        <title>Genome sequence of Yersinia pestis KIM.</title>
        <authorList>
            <person name="Deng W."/>
            <person name="Burland V."/>
            <person name="Plunkett G. III"/>
            <person name="Boutin A."/>
            <person name="Mayhew G.F."/>
            <person name="Liss P."/>
            <person name="Perna N.T."/>
            <person name="Rose D.J."/>
            <person name="Mau B."/>
            <person name="Zhou S."/>
            <person name="Schwartz D.C."/>
            <person name="Fetherston J.D."/>
            <person name="Lindler L.E."/>
            <person name="Brubaker R.R."/>
            <person name="Plano G.V."/>
            <person name="Straley S.C."/>
            <person name="McDonough K.A."/>
            <person name="Nilles M.L."/>
            <person name="Matson J.S."/>
            <person name="Blattner F.R."/>
            <person name="Perry R.D."/>
        </authorList>
    </citation>
    <scope>NUCLEOTIDE SEQUENCE [LARGE SCALE GENOMIC DNA]</scope>
    <source>
        <strain>KIM10+ / Biovar Mediaevalis</strain>
    </source>
</reference>
<reference key="2">
    <citation type="journal article" date="2001" name="Nature">
        <title>Genome sequence of Yersinia pestis, the causative agent of plague.</title>
        <authorList>
            <person name="Parkhill J."/>
            <person name="Wren B.W."/>
            <person name="Thomson N.R."/>
            <person name="Titball R.W."/>
            <person name="Holden M.T.G."/>
            <person name="Prentice M.B."/>
            <person name="Sebaihia M."/>
            <person name="James K.D."/>
            <person name="Churcher C.M."/>
            <person name="Mungall K.L."/>
            <person name="Baker S."/>
            <person name="Basham D."/>
            <person name="Bentley S.D."/>
            <person name="Brooks K."/>
            <person name="Cerdeno-Tarraga A.-M."/>
            <person name="Chillingworth T."/>
            <person name="Cronin A."/>
            <person name="Davies R.M."/>
            <person name="Davis P."/>
            <person name="Dougan G."/>
            <person name="Feltwell T."/>
            <person name="Hamlin N."/>
            <person name="Holroyd S."/>
            <person name="Jagels K."/>
            <person name="Karlyshev A.V."/>
            <person name="Leather S."/>
            <person name="Moule S."/>
            <person name="Oyston P.C.F."/>
            <person name="Quail M.A."/>
            <person name="Rutherford K.M."/>
            <person name="Simmonds M."/>
            <person name="Skelton J."/>
            <person name="Stevens K."/>
            <person name="Whitehead S."/>
            <person name="Barrell B.G."/>
        </authorList>
    </citation>
    <scope>NUCLEOTIDE SEQUENCE [LARGE SCALE GENOMIC DNA]</scope>
    <source>
        <strain>CO-92 / Biovar Orientalis</strain>
    </source>
</reference>
<reference key="3">
    <citation type="journal article" date="2004" name="DNA Res.">
        <title>Complete genome sequence of Yersinia pestis strain 91001, an isolate avirulent to humans.</title>
        <authorList>
            <person name="Song Y."/>
            <person name="Tong Z."/>
            <person name="Wang J."/>
            <person name="Wang L."/>
            <person name="Guo Z."/>
            <person name="Han Y."/>
            <person name="Zhang J."/>
            <person name="Pei D."/>
            <person name="Zhou D."/>
            <person name="Qin H."/>
            <person name="Pang X."/>
            <person name="Han Y."/>
            <person name="Zhai J."/>
            <person name="Li M."/>
            <person name="Cui B."/>
            <person name="Qi Z."/>
            <person name="Jin L."/>
            <person name="Dai R."/>
            <person name="Chen F."/>
            <person name="Li S."/>
            <person name="Ye C."/>
            <person name="Du Z."/>
            <person name="Lin W."/>
            <person name="Wang J."/>
            <person name="Yu J."/>
            <person name="Yang H."/>
            <person name="Wang J."/>
            <person name="Huang P."/>
            <person name="Yang R."/>
        </authorList>
    </citation>
    <scope>NUCLEOTIDE SEQUENCE [LARGE SCALE GENOMIC DNA]</scope>
    <source>
        <strain>91001 / Biovar Mediaevalis</strain>
    </source>
</reference>
<accession>Q7CLC9</accession>
<accession>Q74Y70</accession>
<evidence type="ECO:0000255" key="1">
    <source>
        <dbReference type="HAMAP-Rule" id="MF_01196"/>
    </source>
</evidence>
<sequence>MSFEVFEKLEVKVQQAIDTITLLQMEIEELKEKNNTLTQEVQDAAGSREALVRENEQLKQEQHVWQDRLRALLGKMEEV</sequence>